<comment type="function">
    <text evidence="3">Tropomyosin, in association with the troponin complex, plays a central role in the calcium dependent regulation of muscle contraction.</text>
</comment>
<comment type="subunit">
    <text evidence="2">Homodimer.</text>
</comment>
<comment type="tissue specificity">
    <text evidence="7 9">Expressed in muscle (at protein level) (PubMed:23018510, PubMed:23840718). Expressed in pincer muscles (PubMed:23840718).</text>
</comment>
<comment type="domain">
    <text evidence="11">The molecule is in a coiled coil structure that is formed by 2 polypeptide chains. The sequence exhibits a prominent seven-residues periodicity.</text>
</comment>
<comment type="allergen">
    <text evidence="7 8 9">Causes an allergic reaction in human. Natural and recombinant protein binds to IgE of patients allergic to crabs (PubMed:23018510, PubMed:23393908, PubMed:23840718). Recombinant protein binds to IgE in 75% of the 12 shellfish-allergic patients tested. Heating increases IgE-binding activity. Cross-reacts with giant tiger prawn tropomyosin allergen Pen m 1.0101 (PubMed:23840718). Cross-reacts with crucifix crab tropomyosin allergen Cha f 1 (PubMed:23393908).</text>
</comment>
<comment type="similarity">
    <text evidence="5">Belongs to the tropomyosin family.</text>
</comment>
<sequence>MDAIKKKMQAMKLEKDDAMDRADTLEQQNKEANIRAEKAEEEVHNLQKRMQQLENDLDQVQESLLKANTQLEEKDKALSNAEGEVAALNRRIQLLEEDLERSEERLNTATTKLAEASQAADESERMRKVLENRSLSDEERMDALENQLKEARFLAEEADRKYDEVARKLAMVEADLERAEERAETGESKIVELEEELRVVGNNLKSLEVSEEKANQREEAYKEQIKTLTNKLKAAEARAEFAERSVQKLQKEVDRLEDELVNEKEKYKSTTDELDQAFSELSGY</sequence>
<dbReference type="EMBL" id="JX874982">
    <property type="protein sequence ID" value="AGE44125.1"/>
    <property type="molecule type" value="Genomic_DNA"/>
</dbReference>
<dbReference type="SMR" id="M1H607"/>
<dbReference type="Allergome" id="10220">
    <property type="allergen name" value="Por p 1"/>
</dbReference>
<dbReference type="Allergome" id="10421">
    <property type="allergen name" value="Por p 1.0101"/>
</dbReference>
<dbReference type="GO" id="GO:0042803">
    <property type="term" value="F:protein homodimerization activity"/>
    <property type="evidence" value="ECO:0000250"/>
    <property type="project" value="UniProtKB"/>
</dbReference>
<dbReference type="GO" id="GO:0040011">
    <property type="term" value="P:locomotion"/>
    <property type="evidence" value="ECO:0000250"/>
    <property type="project" value="UniProtKB"/>
</dbReference>
<dbReference type="GO" id="GO:0003012">
    <property type="term" value="P:muscle system process"/>
    <property type="evidence" value="ECO:0000270"/>
    <property type="project" value="UniProtKB"/>
</dbReference>
<dbReference type="GO" id="GO:0006937">
    <property type="term" value="P:regulation of muscle contraction"/>
    <property type="evidence" value="ECO:0000250"/>
    <property type="project" value="UniProtKB"/>
</dbReference>
<dbReference type="FunFam" id="1.20.5.170:FF:000005">
    <property type="entry name" value="Tropomyosin alpha-1 chain"/>
    <property type="match status" value="1"/>
</dbReference>
<dbReference type="FunFam" id="1.20.5.170:FF:000001">
    <property type="entry name" value="Tropomyosin alpha-1 chain isoform 1"/>
    <property type="match status" value="1"/>
</dbReference>
<dbReference type="FunFam" id="1.20.5.340:FF:000001">
    <property type="entry name" value="Tropomyosin alpha-1 chain isoform 2"/>
    <property type="match status" value="1"/>
</dbReference>
<dbReference type="Gene3D" id="1.20.5.170">
    <property type="match status" value="2"/>
</dbReference>
<dbReference type="Gene3D" id="1.20.5.340">
    <property type="match status" value="1"/>
</dbReference>
<dbReference type="InterPro" id="IPR000533">
    <property type="entry name" value="Tropomyosin"/>
</dbReference>
<dbReference type="PANTHER" id="PTHR19269">
    <property type="entry name" value="TROPOMYOSIN"/>
    <property type="match status" value="1"/>
</dbReference>
<dbReference type="Pfam" id="PF00261">
    <property type="entry name" value="Tropomyosin"/>
    <property type="match status" value="1"/>
</dbReference>
<dbReference type="PRINTS" id="PR00194">
    <property type="entry name" value="TROPOMYOSIN"/>
</dbReference>
<dbReference type="SUPFAM" id="SSF57997">
    <property type="entry name" value="Tropomyosin"/>
    <property type="match status" value="1"/>
</dbReference>
<dbReference type="PROSITE" id="PS00326">
    <property type="entry name" value="TROPOMYOSIN"/>
    <property type="match status" value="1"/>
</dbReference>
<evidence type="ECO:0000250" key="1">
    <source>
        <dbReference type="UniProtKB" id="A1KYZ2"/>
    </source>
</evidence>
<evidence type="ECO:0000250" key="2">
    <source>
        <dbReference type="UniProtKB" id="A2V735"/>
    </source>
</evidence>
<evidence type="ECO:0000250" key="3">
    <source>
        <dbReference type="UniProtKB" id="Q22866"/>
    </source>
</evidence>
<evidence type="ECO:0000255" key="4"/>
<evidence type="ECO:0000255" key="5">
    <source>
        <dbReference type="RuleBase" id="RU004515"/>
    </source>
</evidence>
<evidence type="ECO:0000256" key="6">
    <source>
        <dbReference type="SAM" id="MobiDB-lite"/>
    </source>
</evidence>
<evidence type="ECO:0000269" key="7">
    <source>
    </source>
</evidence>
<evidence type="ECO:0000269" key="8">
    <source>
    </source>
</evidence>
<evidence type="ECO:0000269" key="9">
    <source>
    </source>
</evidence>
<evidence type="ECO:0000303" key="10">
    <source>
    </source>
</evidence>
<evidence type="ECO:0000305" key="11"/>
<evidence type="ECO:0000312" key="12">
    <source>
        <dbReference type="EMBL" id="AGE44125.1"/>
    </source>
</evidence>
<feature type="chain" id="PRO_0000455647" description="Tropomyosin Por p 1.0101">
    <location>
        <begin position="1"/>
        <end position="284"/>
    </location>
</feature>
<feature type="region of interest" description="Disordered" evidence="6">
    <location>
        <begin position="1"/>
        <end position="21"/>
    </location>
</feature>
<feature type="coiled-coil region" evidence="4">
    <location>
        <begin position="1"/>
        <end position="280"/>
    </location>
</feature>
<feature type="compositionally biased region" description="Basic and acidic residues" evidence="6">
    <location>
        <begin position="12"/>
        <end position="21"/>
    </location>
</feature>
<feature type="modified residue" description="N-acetylmethionine" evidence="1">
    <location>
        <position position="1"/>
    </location>
</feature>
<feature type="sequence conflict" description="In Ref. 1; AA sequence." evidence="11" ref="1">
    <original>S</original>
    <variation>Q</variation>
    <location>
        <position position="79"/>
    </location>
</feature>
<proteinExistence type="evidence at protein level"/>
<name>TPM_PORPE</name>
<keyword id="KW-0007">Acetylation</keyword>
<keyword id="KW-0020">Allergen</keyword>
<keyword id="KW-0175">Coiled coil</keyword>
<keyword id="KW-0903">Direct protein sequencing</keyword>
<keyword id="KW-0514">Muscle protein</keyword>
<keyword id="KW-0677">Repeat</keyword>
<reference evidence="12" key="1">
    <citation type="journal article" date="2013" name="PLoS ONE">
        <title>IgE Reactivity of Blue Swimmer Crab (Portunus pelagicus) Tropomyosin, Por p 1, and Other Allergens; Cross-Reactivity with Black Tiger Prawn and Effects of Heating.</title>
        <authorList>
            <person name="Abramovitch J.B."/>
            <person name="Kamath S."/>
            <person name="Varese N."/>
            <person name="Zubrinich C."/>
            <person name="Lopata A.L."/>
            <person name="O'Hehir R.E."/>
            <person name="Rolland J.M."/>
        </authorList>
    </citation>
    <scope>NUCLEOTIDE SEQUENCE [GENOMIC DNA]</scope>
    <scope>PROTEIN SEQUENCE OF 77-90; 92-101; 141-149; 168-178; 190-198 AND 252-264</scope>
    <scope>TISSUE SPECIFICITY</scope>
    <scope>IDENTIFICATION BY MASS SPECTROMETRY</scope>
    <scope>ALLERGEN</scope>
    <source>
        <tissue evidence="10 12">Muscle</tissue>
    </source>
</reference>
<reference key="2">
    <citation type="journal article" date="2012" name="Asian Pac. J. Allergy Immunol.">
        <title>Identification of the major allergens of Charybdis feriatus (red crab) and its cross-reactivity with Portunus pelagicus (blue crab).</title>
        <authorList>
            <person name="Misnan R."/>
            <person name="Murad S."/>
            <person name="Yadzir Z.H."/>
            <person name="Abdullah N."/>
        </authorList>
    </citation>
    <scope>ALLERGEN</scope>
</reference>
<reference key="3">
    <citation type="journal article" date="2012" name="Trop. Biomed.">
        <title>Identification of tropomyosin and arginine kinase as major allergens of Portunus pelagicus (blue swimming crab).</title>
        <authorList>
            <person name="Rosmilah M."/>
            <person name="Shahnaz M."/>
            <person name="Zailatul H.M."/>
            <person name="Noormalin A."/>
            <person name="Normilah I."/>
        </authorList>
    </citation>
    <scope>TISSUE SPECIFICITY</scope>
    <scope>IDENTIFICATION BY MASS SPECTROMETRY</scope>
    <scope>ALLERGEN</scope>
</reference>
<organism evidence="12">
    <name type="scientific">Portunus pelagicus</name>
    <name type="common">Blue swimmer crab</name>
    <dbReference type="NCBI Taxonomy" id="80836"/>
    <lineage>
        <taxon>Eukaryota</taxon>
        <taxon>Metazoa</taxon>
        <taxon>Ecdysozoa</taxon>
        <taxon>Arthropoda</taxon>
        <taxon>Crustacea</taxon>
        <taxon>Multicrustacea</taxon>
        <taxon>Malacostraca</taxon>
        <taxon>Eumalacostraca</taxon>
        <taxon>Eucarida</taxon>
        <taxon>Decapoda</taxon>
        <taxon>Pleocyemata</taxon>
        <taxon>Brachyura</taxon>
        <taxon>Eubrachyura</taxon>
        <taxon>Portunoidea</taxon>
        <taxon>Portunidae</taxon>
        <taxon>Portuninae</taxon>
        <taxon>Portunus</taxon>
    </lineage>
</organism>
<accession>M1H607</accession>
<protein>
    <recommendedName>
        <fullName evidence="11">Tropomyosin Por p 1.0101</fullName>
    </recommendedName>
    <alternativeName>
        <fullName evidence="10">Major allergen Por p 1</fullName>
    </alternativeName>
    <allergenName evidence="10">Por p 1.0101</allergenName>
</protein>